<protein>
    <recommendedName>
        <fullName evidence="1">3-ketoacyl-CoA thiolase</fullName>
        <ecNumber evidence="1">2.3.1.16</ecNumber>
    </recommendedName>
    <alternativeName>
        <fullName evidence="1">Acetyl-CoA acyltransferase</fullName>
    </alternativeName>
    <alternativeName>
        <fullName evidence="1">Beta-ketothiolase</fullName>
    </alternativeName>
    <alternativeName>
        <fullName evidence="1">Fatty acid oxidation complex subunit beta</fullName>
    </alternativeName>
</protein>
<gene>
    <name evidence="1" type="primary">fadA</name>
    <name type="ordered locus">plu4403</name>
</gene>
<reference key="1">
    <citation type="journal article" date="2003" name="Nat. Biotechnol.">
        <title>The genome sequence of the entomopathogenic bacterium Photorhabdus luminescens.</title>
        <authorList>
            <person name="Duchaud E."/>
            <person name="Rusniok C."/>
            <person name="Frangeul L."/>
            <person name="Buchrieser C."/>
            <person name="Givaudan A."/>
            <person name="Taourit S."/>
            <person name="Bocs S."/>
            <person name="Boursaux-Eude C."/>
            <person name="Chandler M."/>
            <person name="Charles J.-F."/>
            <person name="Dassa E."/>
            <person name="Derose R."/>
            <person name="Derzelle S."/>
            <person name="Freyssinet G."/>
            <person name="Gaudriault S."/>
            <person name="Medigue C."/>
            <person name="Lanois A."/>
            <person name="Powell K."/>
            <person name="Siguier P."/>
            <person name="Vincent R."/>
            <person name="Wingate V."/>
            <person name="Zouine M."/>
            <person name="Glaser P."/>
            <person name="Boemare N."/>
            <person name="Danchin A."/>
            <person name="Kunst F."/>
        </authorList>
    </citation>
    <scope>NUCLEOTIDE SEQUENCE [LARGE SCALE GENOMIC DNA]</scope>
    <source>
        <strain>DSM 15139 / CIP 105565 / TT01</strain>
    </source>
</reference>
<name>FADA_PHOLL</name>
<keyword id="KW-0012">Acyltransferase</keyword>
<keyword id="KW-0963">Cytoplasm</keyword>
<keyword id="KW-0276">Fatty acid metabolism</keyword>
<keyword id="KW-0442">Lipid degradation</keyword>
<keyword id="KW-0443">Lipid metabolism</keyword>
<keyword id="KW-1185">Reference proteome</keyword>
<keyword id="KW-0808">Transferase</keyword>
<evidence type="ECO:0000255" key="1">
    <source>
        <dbReference type="HAMAP-Rule" id="MF_01620"/>
    </source>
</evidence>
<feature type="chain" id="PRO_0000206377" description="3-ketoacyl-CoA thiolase">
    <location>
        <begin position="1"/>
        <end position="388"/>
    </location>
</feature>
<feature type="active site" description="Acyl-thioester intermediate" evidence="1">
    <location>
        <position position="91"/>
    </location>
</feature>
<feature type="active site" description="Proton acceptor" evidence="1">
    <location>
        <position position="343"/>
    </location>
</feature>
<feature type="active site" description="Proton acceptor" evidence="1">
    <location>
        <position position="373"/>
    </location>
</feature>
<proteinExistence type="inferred from homology"/>
<sequence>MENVVIIDGIRTPMGRSKGGAFRQVRAEDLSAHLMKKLFKRNPAIQQHEIDDIYWGCVQQTLEQGFNIARNAALLADIPHSVPAVTVNRLCGSSMQALHDGARMIMTGEANVTLIGGVEHMGHVPMTHGVDFHPKMSLSVAKAAGVMGLTAEMLAKIHHISREMQDEFALRSHQRATQATQSGAFANEISPIYGHDADGILKRFDYDEVIRSDANLKDLAALRPVFDPVTGSVTAGSSSALSDGASAMLITSESYAKNLGLKPRARIRSMAAVGCDPSIMGYGPVPATQMALKKAGLVLGDIGVIELNEAFAAQSLACLKGLNLLDSMDDKVNLNGGAIALGHPLGCSGARITTTLLNLMERRDVQFGLATMCIGLGQGIATIIERMD</sequence>
<accession>Q7MZ91</accession>
<dbReference type="EC" id="2.3.1.16" evidence="1"/>
<dbReference type="EMBL" id="BX571873">
    <property type="protein sequence ID" value="CAE16775.1"/>
    <property type="molecule type" value="Genomic_DNA"/>
</dbReference>
<dbReference type="RefSeq" id="WP_011148493.1">
    <property type="nucleotide sequence ID" value="NC_005126.1"/>
</dbReference>
<dbReference type="SMR" id="Q7MZ91"/>
<dbReference type="STRING" id="243265.plu4403"/>
<dbReference type="GeneID" id="48850618"/>
<dbReference type="KEGG" id="plu:plu4403"/>
<dbReference type="eggNOG" id="COG0183">
    <property type="taxonomic scope" value="Bacteria"/>
</dbReference>
<dbReference type="HOGENOM" id="CLU_031026_2_2_6"/>
<dbReference type="OrthoDB" id="9764638at2"/>
<dbReference type="UniPathway" id="UPA00659"/>
<dbReference type="Proteomes" id="UP000002514">
    <property type="component" value="Chromosome"/>
</dbReference>
<dbReference type="GO" id="GO:0005737">
    <property type="term" value="C:cytoplasm"/>
    <property type="evidence" value="ECO:0007669"/>
    <property type="project" value="UniProtKB-SubCell"/>
</dbReference>
<dbReference type="GO" id="GO:0003988">
    <property type="term" value="F:acetyl-CoA C-acyltransferase activity"/>
    <property type="evidence" value="ECO:0007669"/>
    <property type="project" value="UniProtKB-UniRule"/>
</dbReference>
<dbReference type="GO" id="GO:0006635">
    <property type="term" value="P:fatty acid beta-oxidation"/>
    <property type="evidence" value="ECO:0007669"/>
    <property type="project" value="UniProtKB-UniRule"/>
</dbReference>
<dbReference type="GO" id="GO:0010124">
    <property type="term" value="P:phenylacetate catabolic process"/>
    <property type="evidence" value="ECO:0007669"/>
    <property type="project" value="TreeGrafter"/>
</dbReference>
<dbReference type="CDD" id="cd00751">
    <property type="entry name" value="thiolase"/>
    <property type="match status" value="1"/>
</dbReference>
<dbReference type="FunFam" id="3.40.47.10:FF:000010">
    <property type="entry name" value="Acetyl-CoA acetyltransferase (Thiolase)"/>
    <property type="match status" value="1"/>
</dbReference>
<dbReference type="Gene3D" id="3.40.47.10">
    <property type="match status" value="2"/>
</dbReference>
<dbReference type="HAMAP" id="MF_01620">
    <property type="entry name" value="FadA"/>
    <property type="match status" value="1"/>
</dbReference>
<dbReference type="InterPro" id="IPR012805">
    <property type="entry name" value="FadA"/>
</dbReference>
<dbReference type="InterPro" id="IPR002155">
    <property type="entry name" value="Thiolase"/>
</dbReference>
<dbReference type="InterPro" id="IPR016039">
    <property type="entry name" value="Thiolase-like"/>
</dbReference>
<dbReference type="InterPro" id="IPR050215">
    <property type="entry name" value="Thiolase-like_sf_Thiolase"/>
</dbReference>
<dbReference type="InterPro" id="IPR020615">
    <property type="entry name" value="Thiolase_acyl_enz_int_AS"/>
</dbReference>
<dbReference type="InterPro" id="IPR020610">
    <property type="entry name" value="Thiolase_AS"/>
</dbReference>
<dbReference type="InterPro" id="IPR020617">
    <property type="entry name" value="Thiolase_C"/>
</dbReference>
<dbReference type="InterPro" id="IPR020613">
    <property type="entry name" value="Thiolase_CS"/>
</dbReference>
<dbReference type="InterPro" id="IPR020616">
    <property type="entry name" value="Thiolase_N"/>
</dbReference>
<dbReference type="NCBIfam" id="TIGR01930">
    <property type="entry name" value="AcCoA-C-Actrans"/>
    <property type="match status" value="1"/>
</dbReference>
<dbReference type="NCBIfam" id="TIGR02445">
    <property type="entry name" value="fadA"/>
    <property type="match status" value="1"/>
</dbReference>
<dbReference type="NCBIfam" id="NF006510">
    <property type="entry name" value="PRK08947.1"/>
    <property type="match status" value="1"/>
</dbReference>
<dbReference type="PANTHER" id="PTHR43853:SF11">
    <property type="entry name" value="3-KETOACYL-COA THIOLASE FADA"/>
    <property type="match status" value="1"/>
</dbReference>
<dbReference type="PANTHER" id="PTHR43853">
    <property type="entry name" value="3-KETOACYL-COA THIOLASE, PEROXISOMAL"/>
    <property type="match status" value="1"/>
</dbReference>
<dbReference type="Pfam" id="PF02803">
    <property type="entry name" value="Thiolase_C"/>
    <property type="match status" value="1"/>
</dbReference>
<dbReference type="Pfam" id="PF00108">
    <property type="entry name" value="Thiolase_N"/>
    <property type="match status" value="1"/>
</dbReference>
<dbReference type="PIRSF" id="PIRSF000429">
    <property type="entry name" value="Ac-CoA_Ac_transf"/>
    <property type="match status" value="1"/>
</dbReference>
<dbReference type="SUPFAM" id="SSF53901">
    <property type="entry name" value="Thiolase-like"/>
    <property type="match status" value="2"/>
</dbReference>
<dbReference type="PROSITE" id="PS00098">
    <property type="entry name" value="THIOLASE_1"/>
    <property type="match status" value="1"/>
</dbReference>
<dbReference type="PROSITE" id="PS00737">
    <property type="entry name" value="THIOLASE_2"/>
    <property type="match status" value="1"/>
</dbReference>
<dbReference type="PROSITE" id="PS00099">
    <property type="entry name" value="THIOLASE_3"/>
    <property type="match status" value="1"/>
</dbReference>
<organism>
    <name type="scientific">Photorhabdus laumondii subsp. laumondii (strain DSM 15139 / CIP 105565 / TT01)</name>
    <name type="common">Photorhabdus luminescens subsp. laumondii</name>
    <dbReference type="NCBI Taxonomy" id="243265"/>
    <lineage>
        <taxon>Bacteria</taxon>
        <taxon>Pseudomonadati</taxon>
        <taxon>Pseudomonadota</taxon>
        <taxon>Gammaproteobacteria</taxon>
        <taxon>Enterobacterales</taxon>
        <taxon>Morganellaceae</taxon>
        <taxon>Photorhabdus</taxon>
    </lineage>
</organism>
<comment type="function">
    <text evidence="1">Catalyzes the final step of fatty acid oxidation in which acetyl-CoA is released and the CoA ester of a fatty acid two carbons shorter is formed.</text>
</comment>
<comment type="catalytic activity">
    <reaction evidence="1">
        <text>an acyl-CoA + acetyl-CoA = a 3-oxoacyl-CoA + CoA</text>
        <dbReference type="Rhea" id="RHEA:21564"/>
        <dbReference type="ChEBI" id="CHEBI:57287"/>
        <dbReference type="ChEBI" id="CHEBI:57288"/>
        <dbReference type="ChEBI" id="CHEBI:58342"/>
        <dbReference type="ChEBI" id="CHEBI:90726"/>
        <dbReference type="EC" id="2.3.1.16"/>
    </reaction>
</comment>
<comment type="pathway">
    <text evidence="1">Lipid metabolism; fatty acid beta-oxidation.</text>
</comment>
<comment type="subunit">
    <text evidence="1">Heterotetramer of two alpha chains (FadB) and two beta chains (FadA).</text>
</comment>
<comment type="subcellular location">
    <subcellularLocation>
        <location evidence="1">Cytoplasm</location>
    </subcellularLocation>
</comment>
<comment type="similarity">
    <text evidence="1">Belongs to the thiolase-like superfamily. Thiolase family.</text>
</comment>